<accession>Q47108</accession>
<keyword id="KW-0002">3D-structure</keyword>
<keyword id="KW-0044">Antibiotic</keyword>
<keyword id="KW-0929">Antimicrobial</keyword>
<keyword id="KW-0078">Bacteriocin</keyword>
<keyword id="KW-1003">Cell membrane</keyword>
<keyword id="KW-0472">Membrane</keyword>
<keyword id="KW-0614">Plasmid</keyword>
<keyword id="KW-0812">Transmembrane</keyword>
<keyword id="KW-1133">Transmembrane helix</keyword>
<gene>
    <name type="primary">caa</name>
</gene>
<proteinExistence type="evidence at protein level"/>
<feature type="chain" id="PRO_0000218667" description="Colicin-A">
    <location>
        <begin position="1" status="less than"/>
        <end position="204"/>
    </location>
</feature>
<feature type="transmembrane region" description="Helical" evidence="1">
    <location>
        <begin position="139"/>
        <end position="161"/>
    </location>
</feature>
<feature type="transmembrane region" description="Helical" evidence="1">
    <location>
        <begin position="165"/>
        <end position="187"/>
    </location>
</feature>
<feature type="non-terminal residue">
    <location>
        <position position="1"/>
    </location>
</feature>
<feature type="helix" evidence="4">
    <location>
        <begin position="8"/>
        <end position="30"/>
    </location>
</feature>
<feature type="helix" evidence="4">
    <location>
        <begin position="32"/>
        <end position="46"/>
    </location>
</feature>
<feature type="helix" evidence="4">
    <location>
        <begin position="56"/>
        <end position="67"/>
    </location>
</feature>
<feature type="helix" evidence="4">
    <location>
        <begin position="70"/>
        <end position="72"/>
    </location>
</feature>
<feature type="helix" evidence="4">
    <location>
        <begin position="76"/>
        <end position="87"/>
    </location>
</feature>
<feature type="helix" evidence="4">
    <location>
        <begin position="91"/>
        <end position="101"/>
    </location>
</feature>
<feature type="helix" evidence="4">
    <location>
        <begin position="103"/>
        <end position="105"/>
    </location>
</feature>
<feature type="helix" evidence="4">
    <location>
        <begin position="110"/>
        <end position="127"/>
    </location>
</feature>
<feature type="helix" evidence="4">
    <location>
        <begin position="131"/>
        <end position="142"/>
    </location>
</feature>
<feature type="helix" evidence="4">
    <location>
        <begin position="147"/>
        <end position="164"/>
    </location>
</feature>
<feature type="helix" evidence="4">
    <location>
        <begin position="169"/>
        <end position="187"/>
    </location>
</feature>
<feature type="helix" evidence="4">
    <location>
        <begin position="190"/>
        <end position="198"/>
    </location>
</feature>
<dbReference type="EMBL" id="M15691">
    <property type="protein sequence ID" value="AAA23592.1"/>
    <property type="molecule type" value="Genomic_DNA"/>
</dbReference>
<dbReference type="PIR" id="I53544">
    <property type="entry name" value="I41169"/>
</dbReference>
<dbReference type="PDB" id="1COL">
    <property type="method" value="X-ray"/>
    <property type="resolution" value="2.40 A"/>
    <property type="chains" value="A/B=1-204"/>
</dbReference>
<dbReference type="PDBsum" id="1COL"/>
<dbReference type="BMRB" id="Q47108"/>
<dbReference type="SMR" id="Q47108"/>
<dbReference type="EvolutionaryTrace" id="Q47108"/>
<dbReference type="GO" id="GO:0005886">
    <property type="term" value="C:plasma membrane"/>
    <property type="evidence" value="ECO:0007669"/>
    <property type="project" value="UniProtKB-SubCell"/>
</dbReference>
<dbReference type="GO" id="GO:0140911">
    <property type="term" value="F:pore-forming activity"/>
    <property type="evidence" value="ECO:0007669"/>
    <property type="project" value="InterPro"/>
</dbReference>
<dbReference type="GO" id="GO:0050829">
    <property type="term" value="P:defense response to Gram-negative bacterium"/>
    <property type="evidence" value="ECO:0007669"/>
    <property type="project" value="InterPro"/>
</dbReference>
<dbReference type="GO" id="GO:0031640">
    <property type="term" value="P:killing of cells of another organism"/>
    <property type="evidence" value="ECO:0007669"/>
    <property type="project" value="UniProtKB-KW"/>
</dbReference>
<dbReference type="Gene3D" id="1.10.490.30">
    <property type="entry name" value="Colicin"/>
    <property type="match status" value="1"/>
</dbReference>
<dbReference type="InterPro" id="IPR000293">
    <property type="entry name" value="Channel_colicin_C"/>
</dbReference>
<dbReference type="InterPro" id="IPR038283">
    <property type="entry name" value="Channel_colicin_C_sf"/>
</dbReference>
<dbReference type="Pfam" id="PF01024">
    <property type="entry name" value="Colicin"/>
    <property type="match status" value="1"/>
</dbReference>
<dbReference type="PRINTS" id="PR00280">
    <property type="entry name" value="CHANLCOLICIN"/>
</dbReference>
<dbReference type="SUPFAM" id="SSF56837">
    <property type="entry name" value="Colicin"/>
    <property type="match status" value="1"/>
</dbReference>
<dbReference type="PROSITE" id="PS00276">
    <property type="entry name" value="CHANNEL_COLICIN"/>
    <property type="match status" value="1"/>
</dbReference>
<evidence type="ECO:0000255" key="1"/>
<evidence type="ECO:0000269" key="2">
    <source>
    </source>
</evidence>
<evidence type="ECO:0000305" key="3"/>
<evidence type="ECO:0007829" key="4">
    <source>
        <dbReference type="PDB" id="1COL"/>
    </source>
</evidence>
<comment type="function">
    <text evidence="2">This colicin is a channel-forming colicin. This class of transmembrane toxins depolarize the cytoplasmic membrane, leading to dissipation of cellular energy.</text>
</comment>
<comment type="function">
    <text evidence="2">Colicins are polypeptide toxins produced by and active against E.coli and closely related bacteria.</text>
</comment>
<comment type="subcellular location">
    <subcellularLocation>
        <location evidence="3">Cell membrane</location>
        <topology evidence="3">Multi-pass membrane protein</topology>
    </subcellularLocation>
</comment>
<comment type="similarity">
    <text evidence="3">Belongs to the channel forming colicin family.</text>
</comment>
<sequence length="204" mass="21790">VAEKAKDERELLEKTSELIAGMGDKIGEHLGDKYKAIAKDIADNIKNFQGKTIRSFDDAMASLNKITANPAMKINKADRDALVNAWKHVDAQDMANKLGNLSKAFKVADVVMKVEKVREKSIEGYETGNWGPLMLEVESWVLSGIASSVALGIFSATLGAYALSLGVPAIAVGIAGILLAAVVGALIDDKFADALNNEIIRPAH</sequence>
<reference key="1">
    <citation type="journal article" date="1987" name="Proc. Natl. Acad. Sci. U.S.A.">
        <title>Site-directed mutagenesis of the COOH-terminal region of colicin A: effect on secretion and voltage-dependent channel activity.</title>
        <authorList>
            <person name="Baty D."/>
            <person name="Knibiehler M."/>
            <person name="Verheij H."/>
            <person name="Pattus F."/>
            <person name="Shire D."/>
            <person name="Bernadac A."/>
            <person name="Lazdunski C."/>
        </authorList>
    </citation>
    <scope>NUCLEOTIDE SEQUENCE [GENOMIC DNA]</scope>
    <scope>FUNCTION</scope>
    <scope>SUBCELLULAR LOCATION</scope>
</reference>
<reference key="2">
    <citation type="journal article" date="1992" name="J. Mol. Biol.">
        <title>Refined structure of the pore-forming domain of colicin A at 2.4-A resolution.</title>
        <authorList>
            <person name="Parker M.W."/>
            <person name="Postma J.P.M."/>
            <person name="Pattus F."/>
            <person name="Tucker A.D."/>
            <person name="Tsernoglou D."/>
        </authorList>
    </citation>
    <scope>X-RAY CRYSTALLOGRAPHY (2.4 ANGSTROMS)</scope>
</reference>
<protein>
    <recommendedName>
        <fullName>Colicin-A</fullName>
    </recommendedName>
</protein>
<geneLocation type="plasmid">
    <name>pColA9</name>
</geneLocation>
<organism>
    <name type="scientific">Escherichia coli</name>
    <dbReference type="NCBI Taxonomy" id="562"/>
    <lineage>
        <taxon>Bacteria</taxon>
        <taxon>Pseudomonadati</taxon>
        <taxon>Pseudomonadota</taxon>
        <taxon>Gammaproteobacteria</taxon>
        <taxon>Enterobacterales</taxon>
        <taxon>Enterobacteriaceae</taxon>
        <taxon>Escherichia</taxon>
    </lineage>
</organism>
<name>CEA_ECOLX</name>